<gene>
    <name evidence="1" type="primary">rpmC</name>
    <name type="ordered locus">SNSL254_A3701</name>
</gene>
<accession>B4SUT2</accession>
<proteinExistence type="inferred from homology"/>
<sequence length="63" mass="7260">MKAKELREKSVEELNTELLNLLREQFNLRMQAASGQLQQSHLLKQVRRDVARVKTLLTEKAGA</sequence>
<dbReference type="EMBL" id="CP001113">
    <property type="protein sequence ID" value="ACF64864.1"/>
    <property type="molecule type" value="Genomic_DNA"/>
</dbReference>
<dbReference type="RefSeq" id="WP_000644742.1">
    <property type="nucleotide sequence ID" value="NZ_CCMR01000003.1"/>
</dbReference>
<dbReference type="SMR" id="B4SUT2"/>
<dbReference type="GeneID" id="93035739"/>
<dbReference type="KEGG" id="see:SNSL254_A3701"/>
<dbReference type="HOGENOM" id="CLU_158491_1_2_6"/>
<dbReference type="Proteomes" id="UP000008824">
    <property type="component" value="Chromosome"/>
</dbReference>
<dbReference type="GO" id="GO:0022625">
    <property type="term" value="C:cytosolic large ribosomal subunit"/>
    <property type="evidence" value="ECO:0007669"/>
    <property type="project" value="TreeGrafter"/>
</dbReference>
<dbReference type="GO" id="GO:0003735">
    <property type="term" value="F:structural constituent of ribosome"/>
    <property type="evidence" value="ECO:0007669"/>
    <property type="project" value="InterPro"/>
</dbReference>
<dbReference type="GO" id="GO:0006412">
    <property type="term" value="P:translation"/>
    <property type="evidence" value="ECO:0007669"/>
    <property type="project" value="UniProtKB-UniRule"/>
</dbReference>
<dbReference type="CDD" id="cd00427">
    <property type="entry name" value="Ribosomal_L29_HIP"/>
    <property type="match status" value="1"/>
</dbReference>
<dbReference type="Gene3D" id="6.10.140.1970">
    <property type="match status" value="1"/>
</dbReference>
<dbReference type="HAMAP" id="MF_00374">
    <property type="entry name" value="Ribosomal_uL29"/>
    <property type="match status" value="1"/>
</dbReference>
<dbReference type="InterPro" id="IPR050063">
    <property type="entry name" value="Ribosomal_protein_uL29"/>
</dbReference>
<dbReference type="InterPro" id="IPR001854">
    <property type="entry name" value="Ribosomal_uL29"/>
</dbReference>
<dbReference type="InterPro" id="IPR018254">
    <property type="entry name" value="Ribosomal_uL29_CS"/>
</dbReference>
<dbReference type="InterPro" id="IPR036049">
    <property type="entry name" value="Ribosomal_uL29_sf"/>
</dbReference>
<dbReference type="NCBIfam" id="TIGR00012">
    <property type="entry name" value="L29"/>
    <property type="match status" value="1"/>
</dbReference>
<dbReference type="PANTHER" id="PTHR10916">
    <property type="entry name" value="60S RIBOSOMAL PROTEIN L35/50S RIBOSOMAL PROTEIN L29"/>
    <property type="match status" value="1"/>
</dbReference>
<dbReference type="PANTHER" id="PTHR10916:SF0">
    <property type="entry name" value="LARGE RIBOSOMAL SUBUNIT PROTEIN UL29C"/>
    <property type="match status" value="1"/>
</dbReference>
<dbReference type="Pfam" id="PF00831">
    <property type="entry name" value="Ribosomal_L29"/>
    <property type="match status" value="1"/>
</dbReference>
<dbReference type="SUPFAM" id="SSF46561">
    <property type="entry name" value="Ribosomal protein L29 (L29p)"/>
    <property type="match status" value="1"/>
</dbReference>
<dbReference type="PROSITE" id="PS00579">
    <property type="entry name" value="RIBOSOMAL_L29"/>
    <property type="match status" value="1"/>
</dbReference>
<protein>
    <recommendedName>
        <fullName evidence="1">Large ribosomal subunit protein uL29</fullName>
    </recommendedName>
    <alternativeName>
        <fullName evidence="2">50S ribosomal protein L29</fullName>
    </alternativeName>
</protein>
<organism>
    <name type="scientific">Salmonella newport (strain SL254)</name>
    <dbReference type="NCBI Taxonomy" id="423368"/>
    <lineage>
        <taxon>Bacteria</taxon>
        <taxon>Pseudomonadati</taxon>
        <taxon>Pseudomonadota</taxon>
        <taxon>Gammaproteobacteria</taxon>
        <taxon>Enterobacterales</taxon>
        <taxon>Enterobacteriaceae</taxon>
        <taxon>Salmonella</taxon>
    </lineage>
</organism>
<feature type="chain" id="PRO_1000121813" description="Large ribosomal subunit protein uL29">
    <location>
        <begin position="1"/>
        <end position="63"/>
    </location>
</feature>
<keyword id="KW-0687">Ribonucleoprotein</keyword>
<keyword id="KW-0689">Ribosomal protein</keyword>
<evidence type="ECO:0000255" key="1">
    <source>
        <dbReference type="HAMAP-Rule" id="MF_00374"/>
    </source>
</evidence>
<evidence type="ECO:0000305" key="2"/>
<name>RL29_SALNS</name>
<reference key="1">
    <citation type="journal article" date="2011" name="J. Bacteriol.">
        <title>Comparative genomics of 28 Salmonella enterica isolates: evidence for CRISPR-mediated adaptive sublineage evolution.</title>
        <authorList>
            <person name="Fricke W.F."/>
            <person name="Mammel M.K."/>
            <person name="McDermott P.F."/>
            <person name="Tartera C."/>
            <person name="White D.G."/>
            <person name="Leclerc J.E."/>
            <person name="Ravel J."/>
            <person name="Cebula T.A."/>
        </authorList>
    </citation>
    <scope>NUCLEOTIDE SEQUENCE [LARGE SCALE GENOMIC DNA]</scope>
    <source>
        <strain>SL254</strain>
    </source>
</reference>
<comment type="similarity">
    <text evidence="1">Belongs to the universal ribosomal protein uL29 family.</text>
</comment>